<accession>P02755</accession>
<accession>O62822</accession>
<feature type="signal peptide" evidence="2">
    <location>
        <begin position="1"/>
        <end position="18"/>
    </location>
</feature>
<feature type="chain" id="PRO_0000017904" description="Beta-lactoglobulin">
    <location>
        <begin position="19"/>
        <end position="180"/>
    </location>
</feature>
<feature type="disulfide bond">
    <location>
        <begin position="84"/>
        <end position="178"/>
    </location>
</feature>
<feature type="disulfide bond" description="Alternate">
    <location>
        <begin position="124"/>
        <end position="139"/>
    </location>
</feature>
<feature type="disulfide bond">
    <location>
        <begin position="124"/>
        <end position="137"/>
    </location>
</feature>
<gene>
    <name type="primary">LGB</name>
</gene>
<comment type="function">
    <text>Primary component of whey, it binds retinol and is probably involved in the transport of that molecule.</text>
</comment>
<comment type="subunit">
    <text evidence="1">Under physiological conditions beta-lactoglobulin exists as an equilibrium mixture of monomeric and dimeric forms (By similarity). Interaction with LMBR1L is controversial (By similarity).</text>
</comment>
<comment type="subcellular location">
    <subcellularLocation>
        <location>Secreted</location>
    </subcellularLocation>
</comment>
<comment type="tissue specificity">
    <text>Synthesized in mammary gland and secreted in milk.</text>
</comment>
<comment type="PTM">
    <text>Alternate disulfide bonds occur in equal amounts.</text>
</comment>
<comment type="similarity">
    <text evidence="3">Belongs to the calycin superfamily. Lipocalin family.</text>
</comment>
<reference key="1">
    <citation type="journal article" date="1999" name="DNA Seq.">
        <title>Molecular cloning and sequence analysis of the cDNA encoding beta-lactoglobulin in Bubalus bubalis.</title>
        <authorList>
            <person name="Das P."/>
            <person name="Jain S."/>
            <person name="Nayak S."/>
            <person name="Apparao K.B.C."/>
            <person name="Totey S.M."/>
            <person name="Garg L.C."/>
        </authorList>
    </citation>
    <scope>NUCLEOTIDE SEQUENCE [MRNA]</scope>
    <source>
        <tissue>Mammary gland</tissue>
    </source>
</reference>
<reference key="2">
    <citation type="journal article" date="1981" name="Milchwissenschaft">
        <title>The amino acid sequence of the water buffalo beta-lactoglobulin.</title>
        <authorList>
            <person name="Kolde H.-J."/>
            <person name="Liberatori J."/>
            <person name="Braunitzer G."/>
        </authorList>
    </citation>
    <scope>PROTEIN SEQUENCE OF 19-180</scope>
</reference>
<protein>
    <recommendedName>
        <fullName>Beta-lactoglobulin</fullName>
        <shortName>Beta-LG</shortName>
    </recommendedName>
</protein>
<evidence type="ECO:0000250" key="1">
    <source>
        <dbReference type="UniProtKB" id="P02754"/>
    </source>
</evidence>
<evidence type="ECO:0000269" key="2">
    <source ref="2"/>
</evidence>
<evidence type="ECO:0000305" key="3"/>
<name>LACB_BUBBU</name>
<dbReference type="EMBL" id="AJ005429">
    <property type="protein sequence ID" value="CAA06532.1"/>
    <property type="molecule type" value="mRNA"/>
</dbReference>
<dbReference type="PIR" id="A03219">
    <property type="entry name" value="LGBUI"/>
</dbReference>
<dbReference type="BMRB" id="P02755"/>
<dbReference type="SMR" id="P02755"/>
<dbReference type="Allergome" id="1258">
    <property type="allergen name" value="Bub b 5"/>
</dbReference>
<dbReference type="GO" id="GO:0005576">
    <property type="term" value="C:extracellular region"/>
    <property type="evidence" value="ECO:0007669"/>
    <property type="project" value="UniProtKB-SubCell"/>
</dbReference>
<dbReference type="GO" id="GO:0019841">
    <property type="term" value="F:retinol binding"/>
    <property type="evidence" value="ECO:0007669"/>
    <property type="project" value="UniProtKB-KW"/>
</dbReference>
<dbReference type="CDD" id="cd19416">
    <property type="entry name" value="lipocalin_beta-LG-like"/>
    <property type="match status" value="1"/>
</dbReference>
<dbReference type="FunFam" id="2.40.128.20:FF:000029">
    <property type="entry name" value="Beta-lactoglobulin"/>
    <property type="match status" value="1"/>
</dbReference>
<dbReference type="Gene3D" id="2.40.128.20">
    <property type="match status" value="1"/>
</dbReference>
<dbReference type="InterPro" id="IPR002447">
    <property type="entry name" value="Blactoglobulin"/>
</dbReference>
<dbReference type="InterPro" id="IPR012674">
    <property type="entry name" value="Calycin"/>
</dbReference>
<dbReference type="InterPro" id="IPR002345">
    <property type="entry name" value="Lipocalin"/>
</dbReference>
<dbReference type="InterPro" id="IPR022272">
    <property type="entry name" value="Lipocalin_CS"/>
</dbReference>
<dbReference type="InterPro" id="IPR000566">
    <property type="entry name" value="Lipocln_cytosolic_FA-bd_dom"/>
</dbReference>
<dbReference type="PANTHER" id="PTHR11430:SF117">
    <property type="entry name" value="GLYCODELIN"/>
    <property type="match status" value="1"/>
</dbReference>
<dbReference type="PANTHER" id="PTHR11430">
    <property type="entry name" value="LIPOCALIN"/>
    <property type="match status" value="1"/>
</dbReference>
<dbReference type="Pfam" id="PF00061">
    <property type="entry name" value="Lipocalin"/>
    <property type="match status" value="1"/>
</dbReference>
<dbReference type="PRINTS" id="PR01172">
    <property type="entry name" value="BLCTOGLOBULN"/>
</dbReference>
<dbReference type="PRINTS" id="PR00179">
    <property type="entry name" value="LIPOCALIN"/>
</dbReference>
<dbReference type="SUPFAM" id="SSF50814">
    <property type="entry name" value="Lipocalins"/>
    <property type="match status" value="1"/>
</dbReference>
<dbReference type="PROSITE" id="PS00213">
    <property type="entry name" value="LIPOCALIN"/>
    <property type="match status" value="1"/>
</dbReference>
<sequence length="180" mass="20023">MKCLLLALGLALACAAQAIIVTQTMKGLDIQKVAGTWYSLAMAASDISLLDAQSAPLRVYVEELKPTPEGDLEILLQKWENGECAQKKIIAEKTKIPAVFKIDALNENKVLVLDTDYKKYLLFCMENSAEPEQSLACQCLVRTPEVDDEALEKFDKALKALPMHIRLSFNPTQLEEQCHV</sequence>
<keyword id="KW-0903">Direct protein sequencing</keyword>
<keyword id="KW-1015">Disulfide bond</keyword>
<keyword id="KW-0494">Milk protein</keyword>
<keyword id="KW-0683">Retinol-binding</keyword>
<keyword id="KW-0964">Secreted</keyword>
<keyword id="KW-0732">Signal</keyword>
<keyword id="KW-0813">Transport</keyword>
<organism>
    <name type="scientific">Bubalus bubalis</name>
    <name type="common">Domestic water buffalo</name>
    <dbReference type="NCBI Taxonomy" id="89462"/>
    <lineage>
        <taxon>Eukaryota</taxon>
        <taxon>Metazoa</taxon>
        <taxon>Chordata</taxon>
        <taxon>Craniata</taxon>
        <taxon>Vertebrata</taxon>
        <taxon>Euteleostomi</taxon>
        <taxon>Mammalia</taxon>
        <taxon>Eutheria</taxon>
        <taxon>Laurasiatheria</taxon>
        <taxon>Artiodactyla</taxon>
        <taxon>Ruminantia</taxon>
        <taxon>Pecora</taxon>
        <taxon>Bovidae</taxon>
        <taxon>Bovinae</taxon>
        <taxon>Bubalus</taxon>
    </lineage>
</organism>
<proteinExistence type="evidence at protein level"/>